<name>ASPD_CUPTR</name>
<reference key="1">
    <citation type="journal article" date="2008" name="Genome Res.">
        <title>Genome sequence of the beta-rhizobium Cupriavidus taiwanensis and comparative genomics of rhizobia.</title>
        <authorList>
            <person name="Amadou C."/>
            <person name="Pascal G."/>
            <person name="Mangenot S."/>
            <person name="Glew M."/>
            <person name="Bontemps C."/>
            <person name="Capela D."/>
            <person name="Carrere S."/>
            <person name="Cruveiller S."/>
            <person name="Dossat C."/>
            <person name="Lajus A."/>
            <person name="Marchetti M."/>
            <person name="Poinsot V."/>
            <person name="Rouy Z."/>
            <person name="Servin B."/>
            <person name="Saad M."/>
            <person name="Schenowitz C."/>
            <person name="Barbe V."/>
            <person name="Batut J."/>
            <person name="Medigue C."/>
            <person name="Masson-Boivin C."/>
        </authorList>
    </citation>
    <scope>NUCLEOTIDE SEQUENCE [LARGE SCALE GENOMIC DNA]</scope>
    <source>
        <strain>DSM 17343 / BCRC 17206 / CCUG 44338 / CIP 107171 / LMG 19424 / R1</strain>
    </source>
</reference>
<feature type="chain" id="PRO_1000140086" description="L-aspartate dehydrogenase">
    <location>
        <begin position="1"/>
        <end position="266"/>
    </location>
</feature>
<feature type="active site" evidence="1">
    <location>
        <position position="219"/>
    </location>
</feature>
<feature type="binding site" evidence="1">
    <location>
        <position position="123"/>
    </location>
    <ligand>
        <name>NAD(+)</name>
        <dbReference type="ChEBI" id="CHEBI:57540"/>
    </ligand>
</feature>
<feature type="binding site" evidence="1">
    <location>
        <position position="189"/>
    </location>
    <ligand>
        <name>NAD(+)</name>
        <dbReference type="ChEBI" id="CHEBI:57540"/>
    </ligand>
</feature>
<organism>
    <name type="scientific">Cupriavidus taiwanensis (strain DSM 17343 / BCRC 17206 / CCUG 44338 / CIP 107171 / LMG 19424 / R1)</name>
    <name type="common">Ralstonia taiwanensis (strain LMG 19424)</name>
    <dbReference type="NCBI Taxonomy" id="977880"/>
    <lineage>
        <taxon>Bacteria</taxon>
        <taxon>Pseudomonadati</taxon>
        <taxon>Pseudomonadota</taxon>
        <taxon>Betaproteobacteria</taxon>
        <taxon>Burkholderiales</taxon>
        <taxon>Burkholderiaceae</taxon>
        <taxon>Cupriavidus</taxon>
    </lineage>
</organism>
<proteinExistence type="inferred from homology"/>
<sequence length="266" mass="27799">MLHVSMVGCGAIGRGVLELLKSDPDVVFDVVIVPEHTMDEARGAVSALAPRARVATHLDDQRPDLLVECAGHHALEEHIVPALERGIPCMVVSVGALSEPGMAERLEAAARRGGTQVQLLSGAIGAIDALAAARVGGLDEVIYTGRKPARAWTGTPAEQLFDLEALTEATVIFEGTARDAARLYPKNANVAATVSLAGLGLDRTAVKLLADPHAVENVHHVEARGAFGGFELTMRGKPLAANPKTSALTVFSVVRALGNRAHAVSI</sequence>
<keyword id="KW-0520">NAD</keyword>
<keyword id="KW-0521">NADP</keyword>
<keyword id="KW-0560">Oxidoreductase</keyword>
<keyword id="KW-0662">Pyridine nucleotide biosynthesis</keyword>
<gene>
    <name evidence="1" type="primary">nadX</name>
    <name type="ordered locus">RALTA_B0572</name>
</gene>
<evidence type="ECO:0000255" key="1">
    <source>
        <dbReference type="HAMAP-Rule" id="MF_01265"/>
    </source>
</evidence>
<accession>B3R8S4</accession>
<dbReference type="EC" id="1.4.1.21" evidence="1"/>
<dbReference type="EMBL" id="CU633750">
    <property type="protein sequence ID" value="CAQ71192.1"/>
    <property type="molecule type" value="Genomic_DNA"/>
</dbReference>
<dbReference type="RefSeq" id="WP_012355417.1">
    <property type="nucleotide sequence ID" value="NC_010530.1"/>
</dbReference>
<dbReference type="SMR" id="B3R8S4"/>
<dbReference type="GeneID" id="29763879"/>
<dbReference type="KEGG" id="cti:RALTA_B0572"/>
<dbReference type="eggNOG" id="COG1712">
    <property type="taxonomic scope" value="Bacteria"/>
</dbReference>
<dbReference type="HOGENOM" id="CLU_089550_0_0_4"/>
<dbReference type="BioCyc" id="CTAI977880:RALTA_RS18495-MONOMER"/>
<dbReference type="UniPathway" id="UPA00253">
    <property type="reaction ID" value="UER00456"/>
</dbReference>
<dbReference type="Proteomes" id="UP000001692">
    <property type="component" value="Chromosome 2"/>
</dbReference>
<dbReference type="GO" id="GO:0033735">
    <property type="term" value="F:aspartate dehydrogenase activity"/>
    <property type="evidence" value="ECO:0007669"/>
    <property type="project" value="UniProtKB-EC"/>
</dbReference>
<dbReference type="GO" id="GO:0051287">
    <property type="term" value="F:NAD binding"/>
    <property type="evidence" value="ECO:0007669"/>
    <property type="project" value="UniProtKB-UniRule"/>
</dbReference>
<dbReference type="GO" id="GO:0050661">
    <property type="term" value="F:NADP binding"/>
    <property type="evidence" value="ECO:0007669"/>
    <property type="project" value="UniProtKB-UniRule"/>
</dbReference>
<dbReference type="GO" id="GO:0016639">
    <property type="term" value="F:oxidoreductase activity, acting on the CH-NH2 group of donors, NAD or NADP as acceptor"/>
    <property type="evidence" value="ECO:0007669"/>
    <property type="project" value="UniProtKB-UniRule"/>
</dbReference>
<dbReference type="GO" id="GO:0009435">
    <property type="term" value="P:NAD biosynthetic process"/>
    <property type="evidence" value="ECO:0007669"/>
    <property type="project" value="UniProtKB-UniRule"/>
</dbReference>
<dbReference type="Gene3D" id="3.30.360.10">
    <property type="entry name" value="Dihydrodipicolinate Reductase, domain 2"/>
    <property type="match status" value="1"/>
</dbReference>
<dbReference type="Gene3D" id="3.40.50.720">
    <property type="entry name" value="NAD(P)-binding Rossmann-like Domain"/>
    <property type="match status" value="1"/>
</dbReference>
<dbReference type="HAMAP" id="MF_01265">
    <property type="entry name" value="NadX"/>
    <property type="match status" value="1"/>
</dbReference>
<dbReference type="InterPro" id="IPR005106">
    <property type="entry name" value="Asp/hSer_DH_NAD-bd"/>
</dbReference>
<dbReference type="InterPro" id="IPR002811">
    <property type="entry name" value="Asp_DH"/>
</dbReference>
<dbReference type="InterPro" id="IPR020626">
    <property type="entry name" value="Asp_DH_prok"/>
</dbReference>
<dbReference type="InterPro" id="IPR011182">
    <property type="entry name" value="L-Asp_DH"/>
</dbReference>
<dbReference type="InterPro" id="IPR036291">
    <property type="entry name" value="NAD(P)-bd_dom_sf"/>
</dbReference>
<dbReference type="NCBIfam" id="NF009827">
    <property type="entry name" value="PRK13303.1-2"/>
    <property type="match status" value="1"/>
</dbReference>
<dbReference type="NCBIfam" id="NF009828">
    <property type="entry name" value="PRK13303.1-3"/>
    <property type="match status" value="1"/>
</dbReference>
<dbReference type="PANTHER" id="PTHR31873:SF6">
    <property type="entry name" value="ASPARTATE DEHYDROGENASE DOMAIN-CONTAINING PROTEIN"/>
    <property type="match status" value="1"/>
</dbReference>
<dbReference type="PANTHER" id="PTHR31873">
    <property type="entry name" value="L-ASPARTATE DEHYDROGENASE-RELATED"/>
    <property type="match status" value="1"/>
</dbReference>
<dbReference type="Pfam" id="PF01958">
    <property type="entry name" value="Asp_DH_C"/>
    <property type="match status" value="1"/>
</dbReference>
<dbReference type="Pfam" id="PF03447">
    <property type="entry name" value="NAD_binding_3"/>
    <property type="match status" value="1"/>
</dbReference>
<dbReference type="PIRSF" id="PIRSF005227">
    <property type="entry name" value="Asp_dh_NAD_syn"/>
    <property type="match status" value="1"/>
</dbReference>
<dbReference type="SUPFAM" id="SSF55347">
    <property type="entry name" value="Glyceraldehyde-3-phosphate dehydrogenase-like, C-terminal domain"/>
    <property type="match status" value="1"/>
</dbReference>
<dbReference type="SUPFAM" id="SSF51735">
    <property type="entry name" value="NAD(P)-binding Rossmann-fold domains"/>
    <property type="match status" value="1"/>
</dbReference>
<protein>
    <recommendedName>
        <fullName evidence="1">L-aspartate dehydrogenase</fullName>
        <ecNumber evidence="1">1.4.1.21</ecNumber>
    </recommendedName>
</protein>
<comment type="function">
    <text evidence="1">Specifically catalyzes the NAD or NADP-dependent dehydrogenation of L-aspartate to iminoaspartate.</text>
</comment>
<comment type="catalytic activity">
    <reaction evidence="1">
        <text>L-aspartate + NADP(+) + H2O = oxaloacetate + NH4(+) + NADPH + H(+)</text>
        <dbReference type="Rhea" id="RHEA:11784"/>
        <dbReference type="ChEBI" id="CHEBI:15377"/>
        <dbReference type="ChEBI" id="CHEBI:15378"/>
        <dbReference type="ChEBI" id="CHEBI:16452"/>
        <dbReference type="ChEBI" id="CHEBI:28938"/>
        <dbReference type="ChEBI" id="CHEBI:29991"/>
        <dbReference type="ChEBI" id="CHEBI:57783"/>
        <dbReference type="ChEBI" id="CHEBI:58349"/>
        <dbReference type="EC" id="1.4.1.21"/>
    </reaction>
</comment>
<comment type="catalytic activity">
    <reaction evidence="1">
        <text>L-aspartate + NAD(+) + H2O = oxaloacetate + NH4(+) + NADH + H(+)</text>
        <dbReference type="Rhea" id="RHEA:11788"/>
        <dbReference type="ChEBI" id="CHEBI:15377"/>
        <dbReference type="ChEBI" id="CHEBI:15378"/>
        <dbReference type="ChEBI" id="CHEBI:16452"/>
        <dbReference type="ChEBI" id="CHEBI:28938"/>
        <dbReference type="ChEBI" id="CHEBI:29991"/>
        <dbReference type="ChEBI" id="CHEBI:57540"/>
        <dbReference type="ChEBI" id="CHEBI:57945"/>
        <dbReference type="EC" id="1.4.1.21"/>
    </reaction>
</comment>
<comment type="pathway">
    <text evidence="1">Cofactor biosynthesis; NAD(+) biosynthesis; iminoaspartate from L-aspartate (dehydrogenase route): step 1/1.</text>
</comment>
<comment type="miscellaneous">
    <text evidence="1">The iminoaspartate product is unstable in aqueous solution and can decompose to oxaloacetate and ammonia.</text>
</comment>
<comment type="similarity">
    <text evidence="1">Belongs to the L-aspartate dehydrogenase family.</text>
</comment>